<feature type="chain" id="PRO_0000283970" description="Envelope small membrane protein">
    <location>
        <begin position="1"/>
        <end position="84"/>
    </location>
</feature>
<feature type="topological domain" description="Virion surface" evidence="1">
    <location>
        <begin position="1"/>
        <end position="18"/>
    </location>
</feature>
<feature type="transmembrane region" description="Helical" evidence="1">
    <location>
        <begin position="19"/>
        <end position="39"/>
    </location>
</feature>
<feature type="topological domain" description="Intravirion" evidence="1">
    <location>
        <begin position="40"/>
        <end position="80"/>
    </location>
</feature>
<proteinExistence type="inferred from homology"/>
<evidence type="ECO:0000255" key="1">
    <source>
        <dbReference type="HAMAP-Rule" id="MF_04204"/>
    </source>
</evidence>
<gene>
    <name evidence="1" type="primary">E</name>
    <name type="synonym">sM</name>
    <name type="ORF">5b</name>
</gene>
<accession>P0C2Q4</accession>
<accession>Q77WX9</accession>
<accession>Q77WY1</accession>
<reference key="1">
    <citation type="journal article" date="1998" name="Virus Genes">
        <title>Nucleotide and predicted amino acid sequences of all genes encoded by the 3' genomic portion (9.5 kb) of respiratory bovine coronaviruses and comparisons among respiratory and enteric coronaviruses.</title>
        <authorList>
            <person name="Chouljenko V.N."/>
            <person name="Kousoulas K.G."/>
            <person name="Lin X.Q."/>
            <person name="Storz J."/>
        </authorList>
    </citation>
    <scope>NUCLEOTIDE SEQUENCE [GENOMIC RNA]</scope>
</reference>
<keyword id="KW-0053">Apoptosis</keyword>
<keyword id="KW-1040">Host Golgi apparatus</keyword>
<keyword id="KW-1043">Host membrane</keyword>
<keyword id="KW-0472">Membrane</keyword>
<keyword id="KW-0812">Transmembrane</keyword>
<keyword id="KW-1133">Transmembrane helix</keyword>
<comment type="function">
    <text evidence="1">Plays a central role in virus morphogenesis and assembly. Acts as a viroporin and self-assembles in host membranes forming pentameric protein-lipid pores that allow ion transport. Also plays a role in the induction of apoptosis.</text>
</comment>
<comment type="subunit">
    <text evidence="1">Homopentamer. Interacts with membrane protein M in the budding compartment of the host cell, which is located between endoplasmic reticulum and the Golgi complex. Interacts with Nucleoprotein.</text>
</comment>
<comment type="subcellular location">
    <subcellularLocation>
        <location evidence="1">Host Golgi apparatus membrane</location>
        <topology evidence="1">Single-pass type III membrane protein</topology>
    </subcellularLocation>
    <text evidence="1">The cytoplasmic tail functions as a Golgi complex-targeting signal.</text>
</comment>
<comment type="similarity">
    <text evidence="1">Belongs to the betacoronaviruses E protein family.</text>
</comment>
<name>VEMP_CVBLY</name>
<dbReference type="EMBL" id="AF058942">
    <property type="protein sequence ID" value="AAF25503.1"/>
    <property type="molecule type" value="Genomic_RNA"/>
</dbReference>
<dbReference type="RefSeq" id="NP_150081.1">
    <property type="nucleotide sequence ID" value="NC_003045.1"/>
</dbReference>
<dbReference type="GeneID" id="921685"/>
<dbReference type="KEGG" id="vg:921685"/>
<dbReference type="GO" id="GO:0044178">
    <property type="term" value="C:host cell Golgi membrane"/>
    <property type="evidence" value="ECO:0007669"/>
    <property type="project" value="UniProtKB-SubCell"/>
</dbReference>
<dbReference type="GO" id="GO:0016020">
    <property type="term" value="C:membrane"/>
    <property type="evidence" value="ECO:0007669"/>
    <property type="project" value="UniProtKB-UniRule"/>
</dbReference>
<dbReference type="GO" id="GO:0140975">
    <property type="term" value="P:disruption of cellular anatomical structure in another organism"/>
    <property type="evidence" value="ECO:0007669"/>
    <property type="project" value="UniProtKB-UniRule"/>
</dbReference>
<dbReference type="GO" id="GO:0046760">
    <property type="term" value="P:viral budding from Golgi membrane"/>
    <property type="evidence" value="ECO:0007669"/>
    <property type="project" value="UniProtKB-UniRule"/>
</dbReference>
<dbReference type="CDD" id="cd21532">
    <property type="entry name" value="HKU1-CoV-like_E"/>
    <property type="match status" value="1"/>
</dbReference>
<dbReference type="HAMAP" id="MF_04204">
    <property type="entry name" value="BETA_CORONA_E"/>
    <property type="match status" value="1"/>
</dbReference>
<dbReference type="InterPro" id="IPR043506">
    <property type="entry name" value="E_protein_bCoV"/>
</dbReference>
<dbReference type="InterPro" id="IPR003873">
    <property type="entry name" value="E_protein_CoV"/>
</dbReference>
<dbReference type="Pfam" id="PF02723">
    <property type="entry name" value="CoV_E"/>
    <property type="match status" value="1"/>
</dbReference>
<dbReference type="PROSITE" id="PS51926">
    <property type="entry name" value="COV_E"/>
    <property type="match status" value="1"/>
</dbReference>
<sequence>MFMADAYFADTVWYVGQIIFIVAICLLVIIVVVAFLATFKLCIQLCGMCNTLVLSPSIYVFNRGRQFYEFYNDVKPPVLDVDDV</sequence>
<organism>
    <name type="scientific">Bovine coronavirus (strain LY-138)</name>
    <name type="common">BCoV</name>
    <name type="synonym">BCV</name>
    <dbReference type="NCBI Taxonomy" id="11131"/>
    <lineage>
        <taxon>Viruses</taxon>
        <taxon>Riboviria</taxon>
        <taxon>Orthornavirae</taxon>
        <taxon>Pisuviricota</taxon>
        <taxon>Pisoniviricetes</taxon>
        <taxon>Nidovirales</taxon>
        <taxon>Cornidovirineae</taxon>
        <taxon>Coronaviridae</taxon>
        <taxon>Orthocoronavirinae</taxon>
        <taxon>Betacoronavirus</taxon>
        <taxon>Embecovirus</taxon>
        <taxon>Betacoronavirus 1</taxon>
    </lineage>
</organism>
<protein>
    <recommendedName>
        <fullName evidence="1">Envelope small membrane protein</fullName>
        <shortName evidence="1">E protein</shortName>
        <shortName evidence="1">sM protein</shortName>
    </recommendedName>
</protein>
<organismHost>
    <name type="scientific">Bos taurus</name>
    <name type="common">Bovine</name>
    <dbReference type="NCBI Taxonomy" id="9913"/>
</organismHost>